<name>RL7_MYCS5</name>
<accession>Q4A5Y8</accession>
<feature type="chain" id="PRO_1000195817" description="Large ribosomal subunit protein bL12">
    <location>
        <begin position="1"/>
        <end position="123"/>
    </location>
</feature>
<keyword id="KW-1185">Reference proteome</keyword>
<keyword id="KW-0687">Ribonucleoprotein</keyword>
<keyword id="KW-0689">Ribosomal protein</keyword>
<evidence type="ECO:0000255" key="1">
    <source>
        <dbReference type="HAMAP-Rule" id="MF_00368"/>
    </source>
</evidence>
<evidence type="ECO:0000305" key="2"/>
<protein>
    <recommendedName>
        <fullName evidence="1">Large ribosomal subunit protein bL12</fullName>
    </recommendedName>
    <alternativeName>
        <fullName evidence="2">50S ribosomal protein L7/L12</fullName>
    </alternativeName>
</protein>
<dbReference type="EMBL" id="AE017245">
    <property type="protein sequence ID" value="AAZ43833.1"/>
    <property type="molecule type" value="Genomic_DNA"/>
</dbReference>
<dbReference type="RefSeq" id="WP_011283564.1">
    <property type="nucleotide sequence ID" value="NC_007294.1"/>
</dbReference>
<dbReference type="SMR" id="Q4A5Y8"/>
<dbReference type="STRING" id="262723.MS53_0421"/>
<dbReference type="KEGG" id="msy:MS53_0421"/>
<dbReference type="eggNOG" id="COG0222">
    <property type="taxonomic scope" value="Bacteria"/>
</dbReference>
<dbReference type="HOGENOM" id="CLU_086499_3_2_14"/>
<dbReference type="OrthoDB" id="9811748at2"/>
<dbReference type="Proteomes" id="UP000000549">
    <property type="component" value="Chromosome"/>
</dbReference>
<dbReference type="GO" id="GO:0022625">
    <property type="term" value="C:cytosolic large ribosomal subunit"/>
    <property type="evidence" value="ECO:0007669"/>
    <property type="project" value="TreeGrafter"/>
</dbReference>
<dbReference type="GO" id="GO:0003729">
    <property type="term" value="F:mRNA binding"/>
    <property type="evidence" value="ECO:0007669"/>
    <property type="project" value="TreeGrafter"/>
</dbReference>
<dbReference type="GO" id="GO:0003735">
    <property type="term" value="F:structural constituent of ribosome"/>
    <property type="evidence" value="ECO:0007669"/>
    <property type="project" value="InterPro"/>
</dbReference>
<dbReference type="GO" id="GO:0006412">
    <property type="term" value="P:translation"/>
    <property type="evidence" value="ECO:0007669"/>
    <property type="project" value="UniProtKB-UniRule"/>
</dbReference>
<dbReference type="CDD" id="cd00387">
    <property type="entry name" value="Ribosomal_L7_L12"/>
    <property type="match status" value="1"/>
</dbReference>
<dbReference type="Gene3D" id="3.30.1390.10">
    <property type="match status" value="1"/>
</dbReference>
<dbReference type="Gene3D" id="1.20.5.710">
    <property type="entry name" value="Single helix bin"/>
    <property type="match status" value="1"/>
</dbReference>
<dbReference type="HAMAP" id="MF_00368">
    <property type="entry name" value="Ribosomal_bL12"/>
    <property type="match status" value="1"/>
</dbReference>
<dbReference type="InterPro" id="IPR000206">
    <property type="entry name" value="Ribosomal_bL12"/>
</dbReference>
<dbReference type="InterPro" id="IPR013823">
    <property type="entry name" value="Ribosomal_bL12_C"/>
</dbReference>
<dbReference type="InterPro" id="IPR014719">
    <property type="entry name" value="Ribosomal_bL12_C/ClpS-like"/>
</dbReference>
<dbReference type="InterPro" id="IPR008932">
    <property type="entry name" value="Ribosomal_bL12_oligo"/>
</dbReference>
<dbReference type="InterPro" id="IPR036235">
    <property type="entry name" value="Ribosomal_bL12_oligo_N_sf"/>
</dbReference>
<dbReference type="NCBIfam" id="TIGR00855">
    <property type="entry name" value="L12"/>
    <property type="match status" value="1"/>
</dbReference>
<dbReference type="PANTHER" id="PTHR45987">
    <property type="entry name" value="39S RIBOSOMAL PROTEIN L12"/>
    <property type="match status" value="1"/>
</dbReference>
<dbReference type="PANTHER" id="PTHR45987:SF4">
    <property type="entry name" value="LARGE RIBOSOMAL SUBUNIT PROTEIN BL12M"/>
    <property type="match status" value="1"/>
</dbReference>
<dbReference type="Pfam" id="PF00542">
    <property type="entry name" value="Ribosomal_L12"/>
    <property type="match status" value="1"/>
</dbReference>
<dbReference type="Pfam" id="PF16320">
    <property type="entry name" value="Ribosomal_L12_N"/>
    <property type="match status" value="1"/>
</dbReference>
<dbReference type="SUPFAM" id="SSF54736">
    <property type="entry name" value="ClpS-like"/>
    <property type="match status" value="1"/>
</dbReference>
<dbReference type="SUPFAM" id="SSF48300">
    <property type="entry name" value="Ribosomal protein L7/12, oligomerisation (N-terminal) domain"/>
    <property type="match status" value="1"/>
</dbReference>
<sequence length="123" mass="12929">MAKLTKETFVESLKEMSIKEVMELVEAMKEEFGVDPAAAVAVAAAPGEAAEAAKTSVKVVLKADNGKKVQIIKAVKDLLGGSLMDAKKIVDNLPAVVKENIKPEEAEPIRAALVEAGAEVSVE</sequence>
<gene>
    <name evidence="1" type="primary">rplL</name>
    <name type="ordered locus">MS53_0421</name>
</gene>
<organism>
    <name type="scientific">Mycoplasmopsis synoviae (strain 53)</name>
    <name type="common">Mycoplasma synoviae</name>
    <dbReference type="NCBI Taxonomy" id="262723"/>
    <lineage>
        <taxon>Bacteria</taxon>
        <taxon>Bacillati</taxon>
        <taxon>Mycoplasmatota</taxon>
        <taxon>Mycoplasmoidales</taxon>
        <taxon>Metamycoplasmataceae</taxon>
        <taxon>Mycoplasmopsis</taxon>
    </lineage>
</organism>
<reference key="1">
    <citation type="journal article" date="2005" name="J. Bacteriol.">
        <title>Swine and poultry pathogens: the complete genome sequences of two strains of Mycoplasma hyopneumoniae and a strain of Mycoplasma synoviae.</title>
        <authorList>
            <person name="Vasconcelos A.T.R."/>
            <person name="Ferreira H.B."/>
            <person name="Bizarro C.V."/>
            <person name="Bonatto S.L."/>
            <person name="Carvalho M.O."/>
            <person name="Pinto P.M."/>
            <person name="Almeida D.F."/>
            <person name="Almeida L.G.P."/>
            <person name="Almeida R."/>
            <person name="Alves-Junior L."/>
            <person name="Assuncao E.N."/>
            <person name="Azevedo V.A.C."/>
            <person name="Bogo M.R."/>
            <person name="Brigido M.M."/>
            <person name="Brocchi M."/>
            <person name="Burity H.A."/>
            <person name="Camargo A.A."/>
            <person name="Camargo S.S."/>
            <person name="Carepo M.S."/>
            <person name="Carraro D.M."/>
            <person name="de Mattos Cascardo J.C."/>
            <person name="Castro L.A."/>
            <person name="Cavalcanti G."/>
            <person name="Chemale G."/>
            <person name="Collevatti R.G."/>
            <person name="Cunha C.W."/>
            <person name="Dallagiovanna B."/>
            <person name="Dambros B.P."/>
            <person name="Dellagostin O.A."/>
            <person name="Falcao C."/>
            <person name="Fantinatti-Garboggini F."/>
            <person name="Felipe M.S.S."/>
            <person name="Fiorentin L."/>
            <person name="Franco G.R."/>
            <person name="Freitas N.S.A."/>
            <person name="Frias D."/>
            <person name="Grangeiro T.B."/>
            <person name="Grisard E.C."/>
            <person name="Guimaraes C.T."/>
            <person name="Hungria M."/>
            <person name="Jardim S.N."/>
            <person name="Krieger M.A."/>
            <person name="Laurino J.P."/>
            <person name="Lima L.F.A."/>
            <person name="Lopes M.I."/>
            <person name="Loreto E.L.S."/>
            <person name="Madeira H.M.F."/>
            <person name="Manfio G.P."/>
            <person name="Maranhao A.Q."/>
            <person name="Martinkovics C.T."/>
            <person name="Medeiros S.R.B."/>
            <person name="Moreira M.A.M."/>
            <person name="Neiva M."/>
            <person name="Ramalho-Neto C.E."/>
            <person name="Nicolas M.F."/>
            <person name="Oliveira S.C."/>
            <person name="Paixao R.F.C."/>
            <person name="Pedrosa F.O."/>
            <person name="Pena S.D.J."/>
            <person name="Pereira M."/>
            <person name="Pereira-Ferrari L."/>
            <person name="Piffer I."/>
            <person name="Pinto L.S."/>
            <person name="Potrich D.P."/>
            <person name="Salim A.C.M."/>
            <person name="Santos F.R."/>
            <person name="Schmitt R."/>
            <person name="Schneider M.P.C."/>
            <person name="Schrank A."/>
            <person name="Schrank I.S."/>
            <person name="Schuck A.F."/>
            <person name="Seuanez H.N."/>
            <person name="Silva D.W."/>
            <person name="Silva R."/>
            <person name="Silva S.C."/>
            <person name="Soares C.M.A."/>
            <person name="Souza K.R.L."/>
            <person name="Souza R.C."/>
            <person name="Staats C.C."/>
            <person name="Steffens M.B.R."/>
            <person name="Teixeira S.M.R."/>
            <person name="Urmenyi T.P."/>
            <person name="Vainstein M.H."/>
            <person name="Zuccherato L.W."/>
            <person name="Simpson A.J.G."/>
            <person name="Zaha A."/>
        </authorList>
    </citation>
    <scope>NUCLEOTIDE SEQUENCE [LARGE SCALE GENOMIC DNA]</scope>
    <source>
        <strain>53</strain>
    </source>
</reference>
<proteinExistence type="inferred from homology"/>
<comment type="function">
    <text evidence="1">Forms part of the ribosomal stalk which helps the ribosome interact with GTP-bound translation factors. Is thus essential for accurate translation.</text>
</comment>
<comment type="subunit">
    <text evidence="1">Homodimer. Part of the ribosomal stalk of the 50S ribosomal subunit. Forms a multimeric L10(L12)X complex, where L10 forms an elongated spine to which 2 to 4 L12 dimers bind in a sequential fashion. Binds GTP-bound translation factors.</text>
</comment>
<comment type="similarity">
    <text evidence="1">Belongs to the bacterial ribosomal protein bL12 family.</text>
</comment>